<feature type="chain" id="PRO_1000017360" description="Large ribosomal subunit protein eL24">
    <location>
        <begin position="1"/>
        <end position="58"/>
    </location>
</feature>
<feature type="zinc finger region" description="C4-type" evidence="1">
    <location>
        <begin position="6"/>
        <end position="36"/>
    </location>
</feature>
<feature type="binding site" evidence="1">
    <location>
        <position position="6"/>
    </location>
    <ligand>
        <name>Zn(2+)</name>
        <dbReference type="ChEBI" id="CHEBI:29105"/>
    </ligand>
</feature>
<feature type="binding site" evidence="1">
    <location>
        <position position="9"/>
    </location>
    <ligand>
        <name>Zn(2+)</name>
        <dbReference type="ChEBI" id="CHEBI:29105"/>
    </ligand>
</feature>
<feature type="binding site" evidence="1">
    <location>
        <position position="32"/>
    </location>
    <ligand>
        <name>Zn(2+)</name>
        <dbReference type="ChEBI" id="CHEBI:29105"/>
    </ligand>
</feature>
<feature type="binding site" evidence="1">
    <location>
        <position position="36"/>
    </location>
    <ligand>
        <name>Zn(2+)</name>
        <dbReference type="ChEBI" id="CHEBI:29105"/>
    </ligand>
</feature>
<evidence type="ECO:0000255" key="1">
    <source>
        <dbReference type="HAMAP-Rule" id="MF_00773"/>
    </source>
</evidence>
<evidence type="ECO:0000305" key="2"/>
<dbReference type="EMBL" id="CP000504">
    <property type="protein sequence ID" value="ABL87766.1"/>
    <property type="molecule type" value="Genomic_DNA"/>
</dbReference>
<dbReference type="RefSeq" id="WP_011762342.1">
    <property type="nucleotide sequence ID" value="NC_008701.1"/>
</dbReference>
<dbReference type="SMR" id="A1RS34"/>
<dbReference type="STRING" id="384616.Pisl_0588"/>
<dbReference type="GeneID" id="4617752"/>
<dbReference type="KEGG" id="pis:Pisl_0588"/>
<dbReference type="eggNOG" id="arCOG01950">
    <property type="taxonomic scope" value="Archaea"/>
</dbReference>
<dbReference type="HOGENOM" id="CLU_190191_0_0_2"/>
<dbReference type="OrthoDB" id="55506at2157"/>
<dbReference type="Proteomes" id="UP000002595">
    <property type="component" value="Chromosome"/>
</dbReference>
<dbReference type="GO" id="GO:1990904">
    <property type="term" value="C:ribonucleoprotein complex"/>
    <property type="evidence" value="ECO:0007669"/>
    <property type="project" value="UniProtKB-KW"/>
</dbReference>
<dbReference type="GO" id="GO:0005840">
    <property type="term" value="C:ribosome"/>
    <property type="evidence" value="ECO:0007669"/>
    <property type="project" value="UniProtKB-KW"/>
</dbReference>
<dbReference type="GO" id="GO:0019843">
    <property type="term" value="F:rRNA binding"/>
    <property type="evidence" value="ECO:0007669"/>
    <property type="project" value="UniProtKB-UniRule"/>
</dbReference>
<dbReference type="GO" id="GO:0003735">
    <property type="term" value="F:structural constituent of ribosome"/>
    <property type="evidence" value="ECO:0007669"/>
    <property type="project" value="InterPro"/>
</dbReference>
<dbReference type="GO" id="GO:0008270">
    <property type="term" value="F:zinc ion binding"/>
    <property type="evidence" value="ECO:0007669"/>
    <property type="project" value="UniProtKB-UniRule"/>
</dbReference>
<dbReference type="GO" id="GO:0006412">
    <property type="term" value="P:translation"/>
    <property type="evidence" value="ECO:0007669"/>
    <property type="project" value="UniProtKB-UniRule"/>
</dbReference>
<dbReference type="CDD" id="cd00472">
    <property type="entry name" value="Ribosomal_L24e_L24"/>
    <property type="match status" value="1"/>
</dbReference>
<dbReference type="Gene3D" id="2.30.170.20">
    <property type="entry name" value="Ribosomal protein L24e"/>
    <property type="match status" value="1"/>
</dbReference>
<dbReference type="HAMAP" id="MF_00773">
    <property type="entry name" value="Ribosomal_eL24"/>
    <property type="match status" value="1"/>
</dbReference>
<dbReference type="InterPro" id="IPR038630">
    <property type="entry name" value="L24e/L24_sf"/>
</dbReference>
<dbReference type="InterPro" id="IPR055345">
    <property type="entry name" value="Ribosomal_eL24-rel_arc"/>
</dbReference>
<dbReference type="InterPro" id="IPR000988">
    <property type="entry name" value="Ribosomal_eL24-rel_N"/>
</dbReference>
<dbReference type="InterPro" id="IPR023442">
    <property type="entry name" value="Ribosomal_eL24_CS"/>
</dbReference>
<dbReference type="InterPro" id="IPR011017">
    <property type="entry name" value="TRASH_dom"/>
</dbReference>
<dbReference type="NCBIfam" id="NF034186">
    <property type="entry name" value="PRK14891.1-1"/>
    <property type="match status" value="1"/>
</dbReference>
<dbReference type="Pfam" id="PF01246">
    <property type="entry name" value="Ribosomal_L24e"/>
    <property type="match status" value="1"/>
</dbReference>
<dbReference type="SMART" id="SM00746">
    <property type="entry name" value="TRASH"/>
    <property type="match status" value="1"/>
</dbReference>
<dbReference type="SUPFAM" id="SSF57716">
    <property type="entry name" value="Glucocorticoid receptor-like (DNA-binding domain)"/>
    <property type="match status" value="1"/>
</dbReference>
<dbReference type="PROSITE" id="PS01073">
    <property type="entry name" value="RIBOSOMAL_L24E"/>
    <property type="match status" value="1"/>
</dbReference>
<accession>A1RS34</accession>
<gene>
    <name evidence="1" type="primary">rpl24e</name>
    <name type="ordered locus">Pisl_0588</name>
</gene>
<name>RL24E_PYRIL</name>
<organism>
    <name type="scientific">Pyrobaculum islandicum (strain DSM 4184 / JCM 9189 / GEO3)</name>
    <dbReference type="NCBI Taxonomy" id="384616"/>
    <lineage>
        <taxon>Archaea</taxon>
        <taxon>Thermoproteota</taxon>
        <taxon>Thermoprotei</taxon>
        <taxon>Thermoproteales</taxon>
        <taxon>Thermoproteaceae</taxon>
        <taxon>Pyrobaculum</taxon>
    </lineage>
</organism>
<proteinExistence type="inferred from homology"/>
<sequence length="58" mass="6809">MKIYKCAFCGADILPGYGIMYVKTDGTTLRFCSRKCFVSAVKFKRDPRRLAWVRKRQK</sequence>
<reference key="1">
    <citation type="submission" date="2006-12" db="EMBL/GenBank/DDBJ databases">
        <title>Complete sequence of Pyrobaculum islandicum DSM 4184.</title>
        <authorList>
            <person name="Copeland A."/>
            <person name="Lucas S."/>
            <person name="Lapidus A."/>
            <person name="Barry K."/>
            <person name="Detter J.C."/>
            <person name="Glavina del Rio T."/>
            <person name="Dalin E."/>
            <person name="Tice H."/>
            <person name="Pitluck S."/>
            <person name="Meincke L."/>
            <person name="Brettin T."/>
            <person name="Bruce D."/>
            <person name="Han C."/>
            <person name="Tapia R."/>
            <person name="Gilna P."/>
            <person name="Schmutz J."/>
            <person name="Larimer F."/>
            <person name="Land M."/>
            <person name="Hauser L."/>
            <person name="Kyrpides N."/>
            <person name="Mikhailova N."/>
            <person name="Cozen A.E."/>
            <person name="Fitz-Gibbon S.T."/>
            <person name="House C.H."/>
            <person name="Saltikov C."/>
            <person name="Lowe T."/>
            <person name="Richardson P."/>
        </authorList>
    </citation>
    <scope>NUCLEOTIDE SEQUENCE [LARGE SCALE GENOMIC DNA]</scope>
    <source>
        <strain>DSM 4184 / JCM 9189 / GEO3</strain>
    </source>
</reference>
<keyword id="KW-0479">Metal-binding</keyword>
<keyword id="KW-0687">Ribonucleoprotein</keyword>
<keyword id="KW-0689">Ribosomal protein</keyword>
<keyword id="KW-0694">RNA-binding</keyword>
<keyword id="KW-0699">rRNA-binding</keyword>
<keyword id="KW-0862">Zinc</keyword>
<keyword id="KW-0863">Zinc-finger</keyword>
<comment type="function">
    <text evidence="1">Binds to the 23S rRNA.</text>
</comment>
<comment type="cofactor">
    <cofactor evidence="1">
        <name>Zn(2+)</name>
        <dbReference type="ChEBI" id="CHEBI:29105"/>
    </cofactor>
    <text evidence="1">Binds 1 zinc ion per subunit.</text>
</comment>
<comment type="subunit">
    <text evidence="1">Part of the 50S ribosomal subunit. Forms a cluster with proteins L3 and L14.</text>
</comment>
<comment type="similarity">
    <text evidence="1">Belongs to the eukaryotic ribosomal protein eL24 family.</text>
</comment>
<protein>
    <recommendedName>
        <fullName evidence="1">Large ribosomal subunit protein eL24</fullName>
    </recommendedName>
    <alternativeName>
        <fullName evidence="2">50S ribosomal protein L24e</fullName>
    </alternativeName>
</protein>